<accession>Q9FF86</accession>
<proteinExistence type="evidence at transcript level"/>
<comment type="function">
    <text evidence="5">Required for incorporation of 9(10),16-dihydroxy-hexadecanoic acid into cutin.</text>
</comment>
<comment type="subcellular location">
    <subcellularLocation>
        <location evidence="4 5">Cytoplasm</location>
        <location evidence="4 5">Cytosol</location>
    </subcellularLocation>
</comment>
<comment type="tissue specificity">
    <text evidence="5">Expressed in root caps and lateral root emerging sites, in trichomes, in epidermis in stems, sepals and anther filaments, and in pollen grains and torpedo stage seeds.</text>
</comment>
<comment type="developmental stage">
    <text evidence="5">Expressed in all 3 inner integumenta layers and 2 outer integument layers in young seeds, but specifically restricted to the inner integumenta in mature seeds.</text>
</comment>
<comment type="disruption phenotype">
    <text evidence="3 4 5">Smaller rosettes, collapsed or tangled trichomes, postgenital fusions between the rosette leaves and flower buds, fusions between sepals, altered cuticle permeability, loss of cuticular folding in petals, abnormal flower and silique development, altered seeds surface, defective mucilage extrusion and semisterility. Increased susceptibility to salinity, osmotic and water deprivation stresses.</text>
</comment>
<comment type="similarity">
    <text evidence="6">Belongs to the plant acyltransferase family.</text>
</comment>
<evidence type="ECO:0000255" key="1"/>
<evidence type="ECO:0000256" key="2">
    <source>
        <dbReference type="SAM" id="MobiDB-lite"/>
    </source>
</evidence>
<evidence type="ECO:0000269" key="3">
    <source>
    </source>
</evidence>
<evidence type="ECO:0000269" key="4">
    <source>
    </source>
</evidence>
<evidence type="ECO:0000269" key="5">
    <source>
    </source>
</evidence>
<evidence type="ECO:0000305" key="6"/>
<sequence>MKIKIMSKTHVKPTKPVLGKKQFHLTTFDLPYLAFYYNQKFLLYKFQNLLDLEEPTFQNEVVENLKDGLGLVLEDFYQLAGKLAKDDEGVFRVEYDAEDSEINGVEFSVAHAADVTVDDLTAEDGTAKFKELVPYNGILNLEGLSRPLLAVQVTKLKDGLAMGLAFNHAVLDGTSTWHFMSSWAEICRGAQSISTQPFLDRSKARDTRVKLDLTAPKDPNETSNGEDAANPTVEPPQLVEKIFRFSDFAVHTIKSRANSVIPSDSSKPFSTFQSLTSHIWRHVTLARGLKPEDITIFTVFADCRRRVDPPMPEEYFGNLIQAIFTGTAAGLLAAHGPEFGASVIQKAIAAHDASVIDARNDEWEKSPKIFQFKDAGVNCVAVGSSPRFRVYEVDFGFGKPETVRSGSNNRFNGMMYLYQGKAGGISIDVEITLEASVMEKLVKSKEFLLSEEEEEDDGKKLTNGNGHVNGNGNGYVNGNGNGFV</sequence>
<feature type="chain" id="PRO_0000391068" description="BAHD acyltransferase DCR">
    <location>
        <begin position="1"/>
        <end position="484"/>
    </location>
</feature>
<feature type="region of interest" description="Disordered" evidence="2">
    <location>
        <begin position="211"/>
        <end position="233"/>
    </location>
</feature>
<feature type="region of interest" description="Disordered" evidence="2">
    <location>
        <begin position="452"/>
        <end position="484"/>
    </location>
</feature>
<feature type="compositionally biased region" description="Gly residues" evidence="2">
    <location>
        <begin position="467"/>
        <end position="484"/>
    </location>
</feature>
<feature type="active site" description="Proton acceptor" evidence="1">
    <location>
        <position position="168"/>
    </location>
</feature>
<feature type="active site" description="Proton acceptor" evidence="1">
    <location>
        <position position="394"/>
    </location>
</feature>
<protein>
    <recommendedName>
        <fullName>BAHD acyltransferase DCR</fullName>
        <ecNumber>2.3.1.-</ecNumber>
    </recommendedName>
    <alternativeName>
        <fullName>Protein DEFECTIVE IN CUTICULAR RIDGES</fullName>
    </alternativeName>
    <alternativeName>
        <fullName>Protein PERMEABLE LEAVES 3</fullName>
    </alternativeName>
</protein>
<dbReference type="EC" id="2.3.1.-"/>
<dbReference type="EMBL" id="AB005244">
    <property type="protein sequence ID" value="BAB10067.1"/>
    <property type="molecule type" value="Genomic_DNA"/>
</dbReference>
<dbReference type="EMBL" id="CP002688">
    <property type="protein sequence ID" value="AED93236.1"/>
    <property type="molecule type" value="Genomic_DNA"/>
</dbReference>
<dbReference type="EMBL" id="AY128300">
    <property type="protein sequence ID" value="AAM91107.1"/>
    <property type="molecule type" value="mRNA"/>
</dbReference>
<dbReference type="EMBL" id="BT000770">
    <property type="protein sequence ID" value="AAN31909.1"/>
    <property type="molecule type" value="mRNA"/>
</dbReference>
<dbReference type="EMBL" id="BT001043">
    <property type="protein sequence ID" value="AAN46797.1"/>
    <property type="molecule type" value="mRNA"/>
</dbReference>
<dbReference type="RefSeq" id="NP_197782.1">
    <property type="nucleotide sequence ID" value="NM_122299.3"/>
</dbReference>
<dbReference type="SMR" id="Q9FF86"/>
<dbReference type="BioGRID" id="17734">
    <property type="interactions" value="4"/>
</dbReference>
<dbReference type="FunCoup" id="Q9FF86">
    <property type="interactions" value="26"/>
</dbReference>
<dbReference type="IntAct" id="Q9FF86">
    <property type="interactions" value="1"/>
</dbReference>
<dbReference type="STRING" id="3702.Q9FF86"/>
<dbReference type="iPTMnet" id="Q9FF86"/>
<dbReference type="PaxDb" id="3702-AT5G23940.1"/>
<dbReference type="ProteomicsDB" id="222759"/>
<dbReference type="DNASU" id="832459"/>
<dbReference type="EnsemblPlants" id="AT5G23940.1">
    <property type="protein sequence ID" value="AT5G23940.1"/>
    <property type="gene ID" value="AT5G23940"/>
</dbReference>
<dbReference type="GeneID" id="832459"/>
<dbReference type="Gramene" id="AT5G23940.1">
    <property type="protein sequence ID" value="AT5G23940.1"/>
    <property type="gene ID" value="AT5G23940"/>
</dbReference>
<dbReference type="KEGG" id="ath:AT5G23940"/>
<dbReference type="Araport" id="AT5G23940"/>
<dbReference type="TAIR" id="AT5G23940">
    <property type="gene designation" value="PEL3"/>
</dbReference>
<dbReference type="eggNOG" id="ENOG502QUE6">
    <property type="taxonomic scope" value="Eukaryota"/>
</dbReference>
<dbReference type="HOGENOM" id="CLU_014546_3_0_1"/>
<dbReference type="InParanoid" id="Q9FF86"/>
<dbReference type="OMA" id="WGKPESV"/>
<dbReference type="PhylomeDB" id="Q9FF86"/>
<dbReference type="BioCyc" id="ARA:AT5G23940-MONOMER"/>
<dbReference type="PRO" id="PR:Q9FF86"/>
<dbReference type="Proteomes" id="UP000006548">
    <property type="component" value="Chromosome 5"/>
</dbReference>
<dbReference type="ExpressionAtlas" id="Q9FF86">
    <property type="expression patterns" value="baseline and differential"/>
</dbReference>
<dbReference type="GO" id="GO:0005737">
    <property type="term" value="C:cytoplasm"/>
    <property type="evidence" value="ECO:0000314"/>
    <property type="project" value="TAIR"/>
</dbReference>
<dbReference type="GO" id="GO:0005829">
    <property type="term" value="C:cytosol"/>
    <property type="evidence" value="ECO:0007669"/>
    <property type="project" value="UniProtKB-SubCell"/>
</dbReference>
<dbReference type="GO" id="GO:0016746">
    <property type="term" value="F:acyltransferase activity"/>
    <property type="evidence" value="ECO:0007669"/>
    <property type="project" value="UniProtKB-KW"/>
</dbReference>
<dbReference type="GO" id="GO:0010143">
    <property type="term" value="P:cutin biosynthetic process"/>
    <property type="evidence" value="ECO:0000315"/>
    <property type="project" value="TAIR"/>
</dbReference>
<dbReference type="GO" id="GO:0051179">
    <property type="term" value="P:localization"/>
    <property type="evidence" value="ECO:0000314"/>
    <property type="project" value="TAIR"/>
</dbReference>
<dbReference type="GO" id="GO:0090626">
    <property type="term" value="P:plant epidermis morphogenesis"/>
    <property type="evidence" value="ECO:0000315"/>
    <property type="project" value="TAIR"/>
</dbReference>
<dbReference type="GO" id="GO:0010090">
    <property type="term" value="P:trichome morphogenesis"/>
    <property type="evidence" value="ECO:0000315"/>
    <property type="project" value="TAIR"/>
</dbReference>
<dbReference type="FunFam" id="3.30.559.10:FF:000074">
    <property type="entry name" value="BAHD acyltransferase DCR-like"/>
    <property type="match status" value="1"/>
</dbReference>
<dbReference type="FunFam" id="3.30.559.10:FF:000008">
    <property type="entry name" value="Tryptamine hydroxycinnamoyl transferase"/>
    <property type="match status" value="1"/>
</dbReference>
<dbReference type="Gene3D" id="3.30.559.10">
    <property type="entry name" value="Chloramphenicol acetyltransferase-like domain"/>
    <property type="match status" value="2"/>
</dbReference>
<dbReference type="InterPro" id="IPR023213">
    <property type="entry name" value="CAT-like_dom_sf"/>
</dbReference>
<dbReference type="InterPro" id="IPR051283">
    <property type="entry name" value="Sec_Metabolite_Acyltrans"/>
</dbReference>
<dbReference type="PANTHER" id="PTHR31896:SF76">
    <property type="entry name" value="BAHD ACYLTRANSFERASE DCR"/>
    <property type="match status" value="1"/>
</dbReference>
<dbReference type="PANTHER" id="PTHR31896">
    <property type="entry name" value="FAMILY REGULATORY PROTEIN, PUTATIVE (AFU_ORTHOLOGUE AFUA_3G14730)-RELATED"/>
    <property type="match status" value="1"/>
</dbReference>
<dbReference type="Pfam" id="PF02458">
    <property type="entry name" value="Transferase"/>
    <property type="match status" value="1"/>
</dbReference>
<keyword id="KW-0012">Acyltransferase</keyword>
<keyword id="KW-0963">Cytoplasm</keyword>
<keyword id="KW-1185">Reference proteome</keyword>
<keyword id="KW-0808">Transferase</keyword>
<gene>
    <name type="primary">DCR</name>
    <name type="synonym">PEL3</name>
    <name type="ordered locus">At5g23940</name>
    <name type="ORF">MRO11.2</name>
</gene>
<name>DCR_ARATH</name>
<organism>
    <name type="scientific">Arabidopsis thaliana</name>
    <name type="common">Mouse-ear cress</name>
    <dbReference type="NCBI Taxonomy" id="3702"/>
    <lineage>
        <taxon>Eukaryota</taxon>
        <taxon>Viridiplantae</taxon>
        <taxon>Streptophyta</taxon>
        <taxon>Embryophyta</taxon>
        <taxon>Tracheophyta</taxon>
        <taxon>Spermatophyta</taxon>
        <taxon>Magnoliopsida</taxon>
        <taxon>eudicotyledons</taxon>
        <taxon>Gunneridae</taxon>
        <taxon>Pentapetalae</taxon>
        <taxon>rosids</taxon>
        <taxon>malvids</taxon>
        <taxon>Brassicales</taxon>
        <taxon>Brassicaceae</taxon>
        <taxon>Camelineae</taxon>
        <taxon>Arabidopsis</taxon>
    </lineage>
</organism>
<reference key="1">
    <citation type="journal article" date="1997" name="DNA Res.">
        <title>Structural analysis of Arabidopsis thaliana chromosome 5. I. Sequence features of the 1.6 Mb regions covered by twenty physically assigned P1 clones.</title>
        <authorList>
            <person name="Sato S."/>
            <person name="Kotani H."/>
            <person name="Nakamura Y."/>
            <person name="Kaneko T."/>
            <person name="Asamizu E."/>
            <person name="Fukami M."/>
            <person name="Miyajima N."/>
            <person name="Tabata S."/>
        </authorList>
    </citation>
    <scope>NUCLEOTIDE SEQUENCE [LARGE SCALE GENOMIC DNA]</scope>
    <source>
        <strain>cv. Columbia</strain>
    </source>
</reference>
<reference key="2">
    <citation type="journal article" date="2017" name="Plant J.">
        <title>Araport11: a complete reannotation of the Arabidopsis thaliana reference genome.</title>
        <authorList>
            <person name="Cheng C.Y."/>
            <person name="Krishnakumar V."/>
            <person name="Chan A.P."/>
            <person name="Thibaud-Nissen F."/>
            <person name="Schobel S."/>
            <person name="Town C.D."/>
        </authorList>
    </citation>
    <scope>GENOME REANNOTATION</scope>
    <source>
        <strain>cv. Columbia</strain>
    </source>
</reference>
<reference key="3">
    <citation type="journal article" date="2003" name="Science">
        <title>Empirical analysis of transcriptional activity in the Arabidopsis genome.</title>
        <authorList>
            <person name="Yamada K."/>
            <person name="Lim J."/>
            <person name="Dale J.M."/>
            <person name="Chen H."/>
            <person name="Shinn P."/>
            <person name="Palm C.J."/>
            <person name="Southwick A.M."/>
            <person name="Wu H.C."/>
            <person name="Kim C.J."/>
            <person name="Nguyen M."/>
            <person name="Pham P.K."/>
            <person name="Cheuk R.F."/>
            <person name="Karlin-Newmann G."/>
            <person name="Liu S.X."/>
            <person name="Lam B."/>
            <person name="Sakano H."/>
            <person name="Wu T."/>
            <person name="Yu G."/>
            <person name="Miranda M."/>
            <person name="Quach H.L."/>
            <person name="Tripp M."/>
            <person name="Chang C.H."/>
            <person name="Lee J.M."/>
            <person name="Toriumi M.J."/>
            <person name="Chan M.M."/>
            <person name="Tang C.C."/>
            <person name="Onodera C.S."/>
            <person name="Deng J.M."/>
            <person name="Akiyama K."/>
            <person name="Ansari Y."/>
            <person name="Arakawa T."/>
            <person name="Banh J."/>
            <person name="Banno F."/>
            <person name="Bowser L."/>
            <person name="Brooks S.Y."/>
            <person name="Carninci P."/>
            <person name="Chao Q."/>
            <person name="Choy N."/>
            <person name="Enju A."/>
            <person name="Goldsmith A.D."/>
            <person name="Gurjal M."/>
            <person name="Hansen N.F."/>
            <person name="Hayashizaki Y."/>
            <person name="Johnson-Hopson C."/>
            <person name="Hsuan V.W."/>
            <person name="Iida K."/>
            <person name="Karnes M."/>
            <person name="Khan S."/>
            <person name="Koesema E."/>
            <person name="Ishida J."/>
            <person name="Jiang P.X."/>
            <person name="Jones T."/>
            <person name="Kawai J."/>
            <person name="Kamiya A."/>
            <person name="Meyers C."/>
            <person name="Nakajima M."/>
            <person name="Narusaka M."/>
            <person name="Seki M."/>
            <person name="Sakurai T."/>
            <person name="Satou M."/>
            <person name="Tamse R."/>
            <person name="Vaysberg M."/>
            <person name="Wallender E.K."/>
            <person name="Wong C."/>
            <person name="Yamamura Y."/>
            <person name="Yuan S."/>
            <person name="Shinozaki K."/>
            <person name="Davis R.W."/>
            <person name="Theologis A."/>
            <person name="Ecker J.R."/>
        </authorList>
    </citation>
    <scope>NUCLEOTIDE SEQUENCE [LARGE SCALE MRNA]</scope>
    <source>
        <strain>cv. Columbia</strain>
    </source>
</reference>
<reference key="4">
    <citation type="journal article" date="2004" name="Plant J.">
        <title>A new method for rapid visualization of defects in leaf cuticle reveals five intrinsic patterns of surface defects in Arabidopsis.</title>
        <authorList>
            <person name="Tanaka T."/>
            <person name="Tanaka H."/>
            <person name="Machida C."/>
            <person name="Watanabe M."/>
            <person name="Machida Y."/>
        </authorList>
    </citation>
    <scope>IDENTIFICATION</scope>
    <scope>DISRUPTION PHENOTYPE</scope>
</reference>
<reference key="5">
    <citation type="journal article" date="2009" name="Mol. Plant">
        <title>Transcriptome analysis of Arabidopsis wild-type and gl3-sst sim trichomes identifies four additional genes required for trichome development.</title>
        <authorList>
            <person name="Marks M.D."/>
            <person name="Wenger J.P."/>
            <person name="Gilding E."/>
            <person name="Jilk R."/>
            <person name="Dixon R.A."/>
        </authorList>
    </citation>
    <scope>DISRUPTION PHENOTYPE</scope>
    <scope>SUBCELLULAR LOCATION</scope>
</reference>
<reference key="6">
    <citation type="journal article" date="2009" name="Plant Physiol.">
        <title>The Arabidopsis DCR encoding a soluble BAHD acyltransferase is required for cutin polyester formation and seed hydration properties.</title>
        <authorList>
            <person name="Panikashvili D."/>
            <person name="Shi J.X."/>
            <person name="Schreiber L."/>
            <person name="Aharoni A."/>
        </authorList>
    </citation>
    <scope>FUNCTION</scope>
    <scope>DISRUPTION PHENOTYPE</scope>
    <scope>TISSUE SPECIFICITY</scope>
    <scope>DEVELOPMENTAL STAGE</scope>
    <scope>SUBCELLULAR LOCATION</scope>
</reference>